<comment type="subcellular location">
    <subcellularLocation>
        <location evidence="3">Membrane</location>
        <topology evidence="3">Single-pass membrane protein</topology>
    </subcellularLocation>
</comment>
<sequence length="58" mass="6829">MNWKVLEHFPLLLYILAAKTLILCLAFAGVKVYQRKRLEAKQQKVEAEKRKQAEKKES</sequence>
<evidence type="ECO:0000250" key="1">
    <source>
        <dbReference type="UniProtKB" id="P58511"/>
    </source>
</evidence>
<evidence type="ECO:0000255" key="2"/>
<evidence type="ECO:0000305" key="3"/>
<name>SIM11_BOVIN</name>
<accession>A6H770</accession>
<feature type="chain" id="PRO_0000341294" description="Small integral membrane protein 11">
    <location>
        <begin position="1"/>
        <end position="58"/>
    </location>
</feature>
<feature type="transmembrane region" description="Helical" evidence="2">
    <location>
        <begin position="9"/>
        <end position="29"/>
    </location>
</feature>
<feature type="coiled-coil region" evidence="2">
    <location>
        <begin position="29"/>
        <end position="58"/>
    </location>
</feature>
<gene>
    <name type="primary">SMIM11</name>
    <name type="synonym">FAM165B</name>
    <name evidence="1" type="synonym">SMIM11A</name>
</gene>
<reference key="1">
    <citation type="submission" date="2007-06" db="EMBL/GenBank/DDBJ databases">
        <authorList>
            <consortium name="NIH - Mammalian Gene Collection (MGC) project"/>
        </authorList>
    </citation>
    <scope>NUCLEOTIDE SEQUENCE [LARGE SCALE MRNA]</scope>
    <source>
        <strain>Hereford</strain>
        <tissue>Thymus</tissue>
    </source>
</reference>
<dbReference type="EMBL" id="BC146134">
    <property type="protein sequence ID" value="AAI46135.1"/>
    <property type="molecule type" value="mRNA"/>
</dbReference>
<dbReference type="RefSeq" id="NP_001107988.1">
    <property type="nucleotide sequence ID" value="NM_001114516.2"/>
</dbReference>
<dbReference type="RefSeq" id="XP_015320273.1">
    <property type="nucleotide sequence ID" value="XM_015464787.1"/>
</dbReference>
<dbReference type="SMR" id="A6H770"/>
<dbReference type="FunCoup" id="A6H770">
    <property type="interactions" value="128"/>
</dbReference>
<dbReference type="STRING" id="9913.ENSBTAP00000015319"/>
<dbReference type="PaxDb" id="9913-ENSBTAP00000015319"/>
<dbReference type="Ensembl" id="ENSBTAT00000015319.3">
    <property type="protein sequence ID" value="ENSBTAP00000015319.2"/>
    <property type="gene ID" value="ENSBTAG00000011528.4"/>
</dbReference>
<dbReference type="GeneID" id="615202"/>
<dbReference type="KEGG" id="bta:615202"/>
<dbReference type="CTD" id="54065"/>
<dbReference type="VEuPathDB" id="HostDB:ENSBTAG00000011528"/>
<dbReference type="eggNOG" id="ENOG502SFJD">
    <property type="taxonomic scope" value="Eukaryota"/>
</dbReference>
<dbReference type="GeneTree" id="ENSGT00640000091610"/>
<dbReference type="HOGENOM" id="CLU_196183_0_0_1"/>
<dbReference type="InParanoid" id="A6H770"/>
<dbReference type="OMA" id="KMWQRKR"/>
<dbReference type="OrthoDB" id="9905024at2759"/>
<dbReference type="TreeFam" id="TF330784"/>
<dbReference type="Proteomes" id="UP000009136">
    <property type="component" value="Chromosome 1"/>
</dbReference>
<dbReference type="Bgee" id="ENSBTAG00000011528">
    <property type="expression patterns" value="Expressed in oocyte and 104 other cell types or tissues"/>
</dbReference>
<dbReference type="GO" id="GO:0016020">
    <property type="term" value="C:membrane"/>
    <property type="evidence" value="ECO:0007669"/>
    <property type="project" value="UniProtKB-SubCell"/>
</dbReference>
<dbReference type="InterPro" id="IPR042125">
    <property type="entry name" value="SMIM11"/>
</dbReference>
<dbReference type="PANTHER" id="PTHR35975:SF1">
    <property type="entry name" value="SMALL INTEGRAL MEMBRANE PROTEIN 11"/>
    <property type="match status" value="1"/>
</dbReference>
<dbReference type="PANTHER" id="PTHR35975">
    <property type="entry name" value="SMALL INTEGRAL MEMBRANE PROTEIN 11A"/>
    <property type="match status" value="1"/>
</dbReference>
<dbReference type="Pfam" id="PF14981">
    <property type="entry name" value="FAM165"/>
    <property type="match status" value="1"/>
</dbReference>
<protein>
    <recommendedName>
        <fullName evidence="1">Small integral membrane protein 11</fullName>
    </recommendedName>
</protein>
<organism>
    <name type="scientific">Bos taurus</name>
    <name type="common">Bovine</name>
    <dbReference type="NCBI Taxonomy" id="9913"/>
    <lineage>
        <taxon>Eukaryota</taxon>
        <taxon>Metazoa</taxon>
        <taxon>Chordata</taxon>
        <taxon>Craniata</taxon>
        <taxon>Vertebrata</taxon>
        <taxon>Euteleostomi</taxon>
        <taxon>Mammalia</taxon>
        <taxon>Eutheria</taxon>
        <taxon>Laurasiatheria</taxon>
        <taxon>Artiodactyla</taxon>
        <taxon>Ruminantia</taxon>
        <taxon>Pecora</taxon>
        <taxon>Bovidae</taxon>
        <taxon>Bovinae</taxon>
        <taxon>Bos</taxon>
    </lineage>
</organism>
<proteinExistence type="predicted"/>
<keyword id="KW-0175">Coiled coil</keyword>
<keyword id="KW-0472">Membrane</keyword>
<keyword id="KW-1185">Reference proteome</keyword>
<keyword id="KW-0812">Transmembrane</keyword>
<keyword id="KW-1133">Transmembrane helix</keyword>